<organism>
    <name type="scientific">Corynebacterium urealyticum (strain ATCC 43042 / DSM 7109)</name>
    <dbReference type="NCBI Taxonomy" id="504474"/>
    <lineage>
        <taxon>Bacteria</taxon>
        <taxon>Bacillati</taxon>
        <taxon>Actinomycetota</taxon>
        <taxon>Actinomycetes</taxon>
        <taxon>Mycobacteriales</taxon>
        <taxon>Corynebacteriaceae</taxon>
        <taxon>Corynebacterium</taxon>
    </lineage>
</organism>
<comment type="function">
    <text evidence="1">Catalyzes the formation of 6,7-dimethyl-8-ribityllumazine by condensation of 5-amino-6-(D-ribitylamino)uracil with 3,4-dihydroxy-2-butanone 4-phosphate. This is the penultimate step in the biosynthesis of riboflavin.</text>
</comment>
<comment type="catalytic activity">
    <reaction evidence="1">
        <text>(2S)-2-hydroxy-3-oxobutyl phosphate + 5-amino-6-(D-ribitylamino)uracil = 6,7-dimethyl-8-(1-D-ribityl)lumazine + phosphate + 2 H2O + H(+)</text>
        <dbReference type="Rhea" id="RHEA:26152"/>
        <dbReference type="ChEBI" id="CHEBI:15377"/>
        <dbReference type="ChEBI" id="CHEBI:15378"/>
        <dbReference type="ChEBI" id="CHEBI:15934"/>
        <dbReference type="ChEBI" id="CHEBI:43474"/>
        <dbReference type="ChEBI" id="CHEBI:58201"/>
        <dbReference type="ChEBI" id="CHEBI:58830"/>
        <dbReference type="EC" id="2.5.1.78"/>
    </reaction>
</comment>
<comment type="pathway">
    <text evidence="1">Cofactor biosynthesis; riboflavin biosynthesis; riboflavin from 2-hydroxy-3-oxobutyl phosphate and 5-amino-6-(D-ribitylamino)uracil: step 1/2.</text>
</comment>
<comment type="similarity">
    <text evidence="1">Belongs to the DMRL synthase family.</text>
</comment>
<sequence length="160" mass="16355">MPAEGIPQINLDPGAAEGLRVAVISAQWNAEITDKLHAEAIGAARELGASVEDWRVAGALELPVVVAAACKNFDAVIATGCVIEGETEHFRVVCDAVTYGLTRVSLDTGVPIGNGVLTVANHQQAVDRAGGPEAKENKGADSATAAIHAALVLRQIAAVG</sequence>
<accession>B1VDP6</accession>
<gene>
    <name evidence="1" type="primary">ribH</name>
    <name type="ordered locus">cu0984</name>
</gene>
<proteinExistence type="inferred from homology"/>
<name>RISB_CORU7</name>
<feature type="chain" id="PRO_1000098180" description="6,7-dimethyl-8-ribityllumazine synthase">
    <location>
        <begin position="1"/>
        <end position="160"/>
    </location>
</feature>
<feature type="active site" description="Proton donor" evidence="1">
    <location>
        <position position="89"/>
    </location>
</feature>
<feature type="binding site" evidence="1">
    <location>
        <position position="28"/>
    </location>
    <ligand>
        <name>5-amino-6-(D-ribitylamino)uracil</name>
        <dbReference type="ChEBI" id="CHEBI:15934"/>
    </ligand>
</feature>
<feature type="binding site" evidence="1">
    <location>
        <begin position="59"/>
        <end position="61"/>
    </location>
    <ligand>
        <name>5-amino-6-(D-ribitylamino)uracil</name>
        <dbReference type="ChEBI" id="CHEBI:15934"/>
    </ligand>
</feature>
<feature type="binding site" evidence="1">
    <location>
        <begin position="81"/>
        <end position="83"/>
    </location>
    <ligand>
        <name>5-amino-6-(D-ribitylamino)uracil</name>
        <dbReference type="ChEBI" id="CHEBI:15934"/>
    </ligand>
</feature>
<feature type="binding site" evidence="1">
    <location>
        <begin position="86"/>
        <end position="87"/>
    </location>
    <ligand>
        <name>(2S)-2-hydroxy-3-oxobutyl phosphate</name>
        <dbReference type="ChEBI" id="CHEBI:58830"/>
    </ligand>
</feature>
<feature type="binding site" evidence="1">
    <location>
        <position position="114"/>
    </location>
    <ligand>
        <name>5-amino-6-(D-ribitylamino)uracil</name>
        <dbReference type="ChEBI" id="CHEBI:15934"/>
    </ligand>
</feature>
<feature type="binding site" evidence="1">
    <location>
        <position position="128"/>
    </location>
    <ligand>
        <name>(2S)-2-hydroxy-3-oxobutyl phosphate</name>
        <dbReference type="ChEBI" id="CHEBI:58830"/>
    </ligand>
</feature>
<reference key="1">
    <citation type="journal article" date="2008" name="J. Biotechnol.">
        <title>The lifestyle of Corynebacterium urealyticum derived from its complete genome sequence established by pyrosequencing.</title>
        <authorList>
            <person name="Tauch A."/>
            <person name="Trost E."/>
            <person name="Tilker A."/>
            <person name="Ludewig U."/>
            <person name="Schneiker S."/>
            <person name="Goesmann A."/>
            <person name="Arnold W."/>
            <person name="Bekel T."/>
            <person name="Brinkrolf K."/>
            <person name="Brune I."/>
            <person name="Goetker S."/>
            <person name="Kalinowski J."/>
            <person name="Kamp P.-B."/>
            <person name="Lobo F.P."/>
            <person name="Viehoever P."/>
            <person name="Weisshaar B."/>
            <person name="Soriano F."/>
            <person name="Droege M."/>
            <person name="Puehler A."/>
        </authorList>
    </citation>
    <scope>NUCLEOTIDE SEQUENCE [LARGE SCALE GENOMIC DNA]</scope>
    <source>
        <strain>ATCC 43042 / DSM 7109</strain>
    </source>
</reference>
<dbReference type="EC" id="2.5.1.78" evidence="1"/>
<dbReference type="EMBL" id="AM942444">
    <property type="protein sequence ID" value="CAQ04944.1"/>
    <property type="molecule type" value="Genomic_DNA"/>
</dbReference>
<dbReference type="RefSeq" id="WP_012360232.1">
    <property type="nucleotide sequence ID" value="NC_010545.1"/>
</dbReference>
<dbReference type="SMR" id="B1VDP6"/>
<dbReference type="STRING" id="504474.cu0984"/>
<dbReference type="GeneID" id="60603763"/>
<dbReference type="KEGG" id="cur:cu0984"/>
<dbReference type="eggNOG" id="COG0054">
    <property type="taxonomic scope" value="Bacteria"/>
</dbReference>
<dbReference type="HOGENOM" id="CLU_089358_1_2_11"/>
<dbReference type="UniPathway" id="UPA00275">
    <property type="reaction ID" value="UER00404"/>
</dbReference>
<dbReference type="Proteomes" id="UP000001727">
    <property type="component" value="Chromosome"/>
</dbReference>
<dbReference type="GO" id="GO:0005829">
    <property type="term" value="C:cytosol"/>
    <property type="evidence" value="ECO:0007669"/>
    <property type="project" value="TreeGrafter"/>
</dbReference>
<dbReference type="GO" id="GO:0009349">
    <property type="term" value="C:riboflavin synthase complex"/>
    <property type="evidence" value="ECO:0007669"/>
    <property type="project" value="InterPro"/>
</dbReference>
<dbReference type="GO" id="GO:0000906">
    <property type="term" value="F:6,7-dimethyl-8-ribityllumazine synthase activity"/>
    <property type="evidence" value="ECO:0007669"/>
    <property type="project" value="UniProtKB-UniRule"/>
</dbReference>
<dbReference type="GO" id="GO:0009231">
    <property type="term" value="P:riboflavin biosynthetic process"/>
    <property type="evidence" value="ECO:0007669"/>
    <property type="project" value="UniProtKB-UniRule"/>
</dbReference>
<dbReference type="CDD" id="cd09209">
    <property type="entry name" value="Lumazine_synthase-I"/>
    <property type="match status" value="1"/>
</dbReference>
<dbReference type="Gene3D" id="3.40.50.960">
    <property type="entry name" value="Lumazine/riboflavin synthase"/>
    <property type="match status" value="1"/>
</dbReference>
<dbReference type="HAMAP" id="MF_00178">
    <property type="entry name" value="Lumazine_synth"/>
    <property type="match status" value="1"/>
</dbReference>
<dbReference type="InterPro" id="IPR034964">
    <property type="entry name" value="LS"/>
</dbReference>
<dbReference type="InterPro" id="IPR002180">
    <property type="entry name" value="LS/RS"/>
</dbReference>
<dbReference type="InterPro" id="IPR036467">
    <property type="entry name" value="LS/RS_sf"/>
</dbReference>
<dbReference type="NCBIfam" id="TIGR00114">
    <property type="entry name" value="lumazine-synth"/>
    <property type="match status" value="1"/>
</dbReference>
<dbReference type="PANTHER" id="PTHR21058:SF0">
    <property type="entry name" value="6,7-DIMETHYL-8-RIBITYLLUMAZINE SYNTHASE"/>
    <property type="match status" value="1"/>
</dbReference>
<dbReference type="PANTHER" id="PTHR21058">
    <property type="entry name" value="6,7-DIMETHYL-8-RIBITYLLUMAZINE SYNTHASE DMRL SYNTHASE LUMAZINE SYNTHASE"/>
    <property type="match status" value="1"/>
</dbReference>
<dbReference type="Pfam" id="PF00885">
    <property type="entry name" value="DMRL_synthase"/>
    <property type="match status" value="1"/>
</dbReference>
<dbReference type="SUPFAM" id="SSF52121">
    <property type="entry name" value="Lumazine synthase"/>
    <property type="match status" value="1"/>
</dbReference>
<keyword id="KW-1185">Reference proteome</keyword>
<keyword id="KW-0686">Riboflavin biosynthesis</keyword>
<keyword id="KW-0808">Transferase</keyword>
<protein>
    <recommendedName>
        <fullName evidence="1">6,7-dimethyl-8-ribityllumazine synthase</fullName>
        <shortName evidence="1">DMRL synthase</shortName>
        <shortName evidence="1">LS</shortName>
        <shortName evidence="1">Lumazine synthase</shortName>
        <ecNumber evidence="1">2.5.1.78</ecNumber>
    </recommendedName>
</protein>
<evidence type="ECO:0000255" key="1">
    <source>
        <dbReference type="HAMAP-Rule" id="MF_00178"/>
    </source>
</evidence>